<proteinExistence type="inferred from homology"/>
<comment type="function">
    <text evidence="1">Catalyzes the conversion of epoxyqueuosine (oQ) to queuosine (Q), which is a hypermodified base found in the wobble positions of tRNA(Asp), tRNA(Asn), tRNA(His) and tRNA(Tyr).</text>
</comment>
<comment type="catalytic activity">
    <reaction evidence="1">
        <text>epoxyqueuosine(34) in tRNA + AH2 = queuosine(34) in tRNA + A + H2O</text>
        <dbReference type="Rhea" id="RHEA:32159"/>
        <dbReference type="Rhea" id="RHEA-COMP:18571"/>
        <dbReference type="Rhea" id="RHEA-COMP:18582"/>
        <dbReference type="ChEBI" id="CHEBI:13193"/>
        <dbReference type="ChEBI" id="CHEBI:15377"/>
        <dbReference type="ChEBI" id="CHEBI:17499"/>
        <dbReference type="ChEBI" id="CHEBI:194431"/>
        <dbReference type="ChEBI" id="CHEBI:194443"/>
        <dbReference type="EC" id="1.17.99.6"/>
    </reaction>
</comment>
<comment type="pathway">
    <text evidence="1 5">tRNA modification; tRNA-queuosine biosynthesis.</text>
</comment>
<comment type="disruption phenotype">
    <text evidence="2">Queuosine is observed in queG or queH single mutants, but queG-queH double mutants accumulate epoxyqueuosine and lack queuosine.</text>
</comment>
<comment type="similarity">
    <text evidence="1 4">Belongs to the QueH family.</text>
</comment>
<gene>
    <name evidence="1 3" type="primary">queH</name>
    <name evidence="6" type="ordered locus">ACIAD2098</name>
</gene>
<reference key="1">
    <citation type="journal article" date="2004" name="Nucleic Acids Res.">
        <title>Unique features revealed by the genome sequence of Acinetobacter sp. ADP1, a versatile and naturally transformation competent bacterium.</title>
        <authorList>
            <person name="Barbe V."/>
            <person name="Vallenet D."/>
            <person name="Fonknechten N."/>
            <person name="Kreimeyer A."/>
            <person name="Oztas S."/>
            <person name="Labarre L."/>
            <person name="Cruveiller S."/>
            <person name="Robert C."/>
            <person name="Duprat S."/>
            <person name="Wincker P."/>
            <person name="Ornston L.N."/>
            <person name="Weissenbach J."/>
            <person name="Marliere P."/>
            <person name="Cohen G.N."/>
            <person name="Medigue C."/>
        </authorList>
    </citation>
    <scope>NUCLEOTIDE SEQUENCE [LARGE SCALE GENOMIC DNA]</scope>
    <source>
        <strain>ATCC 33305 / BD413 / ADP1</strain>
    </source>
</reference>
<reference key="2">
    <citation type="journal article" date="2017" name="ACS Chem. Biol.">
        <title>Identification of a novel epoxyqueuosine reductase family by comparative genomics.</title>
        <authorList>
            <person name="Zallot R."/>
            <person name="Ross R."/>
            <person name="Chen W.H."/>
            <person name="Bruner S.D."/>
            <person name="Limbach P.A."/>
            <person name="de Crecy-Lagard V."/>
        </authorList>
    </citation>
    <scope>DISRUPTION PHENOTYPE</scope>
    <scope>PATHWAY</scope>
    <source>
        <strain>ATCC 33305 / BD413 / ADP1</strain>
    </source>
</reference>
<dbReference type="EC" id="1.17.99.6" evidence="1 5"/>
<dbReference type="EMBL" id="CR543861">
    <property type="protein sequence ID" value="CAG68906.1"/>
    <property type="molecule type" value="Genomic_DNA"/>
</dbReference>
<dbReference type="RefSeq" id="WP_004927559.1">
    <property type="nucleotide sequence ID" value="NC_005966.1"/>
</dbReference>
<dbReference type="SMR" id="Q6FAK7"/>
<dbReference type="STRING" id="202950.GCA_001485005_00284"/>
<dbReference type="GeneID" id="45234443"/>
<dbReference type="KEGG" id="aci:ACIAD2098"/>
<dbReference type="eggNOG" id="COG1636">
    <property type="taxonomic scope" value="Bacteria"/>
</dbReference>
<dbReference type="HOGENOM" id="CLU_088177_0_0_6"/>
<dbReference type="OrthoDB" id="9801033at2"/>
<dbReference type="BioCyc" id="ASP62977:ACIAD_RS09625-MONOMER"/>
<dbReference type="BRENDA" id="1.17.99.6">
    <property type="organism ID" value="8909"/>
</dbReference>
<dbReference type="UniPathway" id="UPA00392"/>
<dbReference type="Proteomes" id="UP000000430">
    <property type="component" value="Chromosome"/>
</dbReference>
<dbReference type="GO" id="GO:0051539">
    <property type="term" value="F:4 iron, 4 sulfur cluster binding"/>
    <property type="evidence" value="ECO:0007669"/>
    <property type="project" value="UniProtKB-UniRule"/>
</dbReference>
<dbReference type="GO" id="GO:0052693">
    <property type="term" value="F:epoxyqueuosine reductase activity"/>
    <property type="evidence" value="ECO:0007669"/>
    <property type="project" value="UniProtKB-UniRule"/>
</dbReference>
<dbReference type="GO" id="GO:0046872">
    <property type="term" value="F:metal ion binding"/>
    <property type="evidence" value="ECO:0007669"/>
    <property type="project" value="UniProtKB-KW"/>
</dbReference>
<dbReference type="GO" id="GO:0008616">
    <property type="term" value="P:queuosine biosynthetic process"/>
    <property type="evidence" value="ECO:0007669"/>
    <property type="project" value="UniProtKB-UniRule"/>
</dbReference>
<dbReference type="GO" id="GO:0006400">
    <property type="term" value="P:tRNA modification"/>
    <property type="evidence" value="ECO:0007669"/>
    <property type="project" value="UniProtKB-UniRule"/>
</dbReference>
<dbReference type="HAMAP" id="MF_02089">
    <property type="entry name" value="QueH"/>
    <property type="match status" value="1"/>
</dbReference>
<dbReference type="InterPro" id="IPR003828">
    <property type="entry name" value="QueH"/>
</dbReference>
<dbReference type="PANTHER" id="PTHR36701">
    <property type="entry name" value="EPOXYQUEUOSINE REDUCTASE QUEH"/>
    <property type="match status" value="1"/>
</dbReference>
<dbReference type="PANTHER" id="PTHR36701:SF1">
    <property type="entry name" value="EPOXYQUEUOSINE REDUCTASE QUEH"/>
    <property type="match status" value="1"/>
</dbReference>
<dbReference type="Pfam" id="PF02677">
    <property type="entry name" value="QueH"/>
    <property type="match status" value="1"/>
</dbReference>
<name>QUEH_ACIAD</name>
<protein>
    <recommendedName>
        <fullName evidence="1 3">Epoxyqueuosine reductase QueH</fullName>
        <ecNumber evidence="1 5">1.17.99.6</ecNumber>
    </recommendedName>
    <alternativeName>
        <fullName evidence="1 4">Queuosine biosynthesis protein QueH</fullName>
    </alternativeName>
</protein>
<organism>
    <name type="scientific">Acinetobacter baylyi (strain ATCC 33305 / BD413 / ADP1)</name>
    <dbReference type="NCBI Taxonomy" id="62977"/>
    <lineage>
        <taxon>Bacteria</taxon>
        <taxon>Pseudomonadati</taxon>
        <taxon>Pseudomonadota</taxon>
        <taxon>Gammaproteobacteria</taxon>
        <taxon>Moraxellales</taxon>
        <taxon>Moraxellaceae</taxon>
        <taxon>Acinetobacter</taxon>
    </lineage>
</organism>
<keyword id="KW-0004">4Fe-4S</keyword>
<keyword id="KW-1015">Disulfide bond</keyword>
<keyword id="KW-0408">Iron</keyword>
<keyword id="KW-0411">Iron-sulfur</keyword>
<keyword id="KW-0479">Metal-binding</keyword>
<keyword id="KW-0560">Oxidoreductase</keyword>
<keyword id="KW-0671">Queuosine biosynthesis</keyword>
<keyword id="KW-0676">Redox-active center</keyword>
<keyword id="KW-0819">tRNA processing</keyword>
<sequence length="218" mass="25827">MSKPRIKLKLPDNADKLLLHSCCAPCSGEVMETLLYSGIDYSIFFYNPNIHPVKEYLIRKEENIRFAEKHNIPFIDCDYDTDNWFERAKGMENEPEKGIRCTMCFDMRFERAALYAYENGFKVFSSSLGISRWKNMEQINDCGIRAASHYPDIHYWDYNWRKNGGATRMLEISKREEFYQQEYCGCVYSLRDTNRWRMSQGRDRIQLGVKFYSASDPD</sequence>
<evidence type="ECO:0000255" key="1">
    <source>
        <dbReference type="HAMAP-Rule" id="MF_02089"/>
    </source>
</evidence>
<evidence type="ECO:0000269" key="2">
    <source>
    </source>
</evidence>
<evidence type="ECO:0000303" key="3">
    <source>
    </source>
</evidence>
<evidence type="ECO:0000305" key="4"/>
<evidence type="ECO:0000305" key="5">
    <source>
    </source>
</evidence>
<evidence type="ECO:0000312" key="6">
    <source>
        <dbReference type="EMBL" id="CAG68906.1"/>
    </source>
</evidence>
<feature type="chain" id="PRO_0000439898" description="Epoxyqueuosine reductase QueH">
    <location>
        <begin position="1"/>
        <end position="218"/>
    </location>
</feature>
<feature type="binding site" evidence="1">
    <location>
        <position position="22"/>
    </location>
    <ligand>
        <name>[4Fe-4S] cluster</name>
        <dbReference type="ChEBI" id="CHEBI:49883"/>
    </ligand>
</feature>
<feature type="binding site" evidence="1">
    <location>
        <position position="23"/>
    </location>
    <ligand>
        <name>[4Fe-4S] cluster</name>
        <dbReference type="ChEBI" id="CHEBI:49883"/>
    </ligand>
</feature>
<feature type="binding site" evidence="1">
    <location>
        <position position="101"/>
    </location>
    <ligand>
        <name>[4Fe-4S] cluster</name>
        <dbReference type="ChEBI" id="CHEBI:49883"/>
    </ligand>
</feature>
<feature type="binding site" evidence="1">
    <location>
        <position position="104"/>
    </location>
    <ligand>
        <name>[4Fe-4S] cluster</name>
        <dbReference type="ChEBI" id="CHEBI:49883"/>
    </ligand>
</feature>
<feature type="disulfide bond" description="Redox-active" evidence="1">
    <location>
        <begin position="184"/>
        <end position="186"/>
    </location>
</feature>
<accession>Q6FAK7</accession>